<protein>
    <recommendedName>
        <fullName evidence="1">Large ribosomal subunit protein uL23</fullName>
    </recommendedName>
    <alternativeName>
        <fullName evidence="2">50S ribosomal protein L23</fullName>
    </alternativeName>
</protein>
<name>RL23_CLOD6</name>
<feature type="chain" id="PRO_1000068066" description="Large ribosomal subunit protein uL23">
    <location>
        <begin position="1"/>
        <end position="96"/>
    </location>
</feature>
<sequence>MTNPHDVIIRPVVTEHSMAEMGEKKYTFVVAKDANKTEIKKAVEKVFGVSVDKVNTLNYDGKVKRMGRTQGRTSSFKKAVVKLTADSKEIEFFQGM</sequence>
<evidence type="ECO:0000255" key="1">
    <source>
        <dbReference type="HAMAP-Rule" id="MF_01369"/>
    </source>
</evidence>
<evidence type="ECO:0000305" key="2"/>
<comment type="function">
    <text evidence="1">One of the early assembly proteins it binds 23S rRNA. One of the proteins that surrounds the polypeptide exit tunnel on the outside of the ribosome. Forms the main docking site for trigger factor binding to the ribosome.</text>
</comment>
<comment type="subunit">
    <text evidence="1">Part of the 50S ribosomal subunit. Contacts protein L29, and trigger factor when it is bound to the ribosome.</text>
</comment>
<comment type="similarity">
    <text evidence="1">Belongs to the universal ribosomal protein uL23 family.</text>
</comment>
<accession>Q18CF8</accession>
<dbReference type="EMBL" id="AM180355">
    <property type="protein sequence ID" value="CAJ66890.1"/>
    <property type="molecule type" value="Genomic_DNA"/>
</dbReference>
<dbReference type="RefSeq" id="WP_003435681.1">
    <property type="nucleotide sequence ID" value="NZ_JAUPES010000043.1"/>
</dbReference>
<dbReference type="RefSeq" id="YP_001086539.1">
    <property type="nucleotide sequence ID" value="NC_009089.1"/>
</dbReference>
<dbReference type="SMR" id="Q18CF8"/>
<dbReference type="STRING" id="272563.CD630_00750"/>
<dbReference type="EnsemblBacteria" id="CAJ66890">
    <property type="protein sequence ID" value="CAJ66890"/>
    <property type="gene ID" value="CD630_00750"/>
</dbReference>
<dbReference type="GeneID" id="66352573"/>
<dbReference type="KEGG" id="cdf:CD630_00750"/>
<dbReference type="KEGG" id="pdc:CDIF630_00141"/>
<dbReference type="PATRIC" id="fig|272563.120.peg.81"/>
<dbReference type="eggNOG" id="COG0089">
    <property type="taxonomic scope" value="Bacteria"/>
</dbReference>
<dbReference type="OrthoDB" id="9793353at2"/>
<dbReference type="PhylomeDB" id="Q18CF8"/>
<dbReference type="BioCyc" id="PDIF272563:G12WB-129-MONOMER"/>
<dbReference type="Proteomes" id="UP000001978">
    <property type="component" value="Chromosome"/>
</dbReference>
<dbReference type="GO" id="GO:1990904">
    <property type="term" value="C:ribonucleoprotein complex"/>
    <property type="evidence" value="ECO:0007669"/>
    <property type="project" value="UniProtKB-KW"/>
</dbReference>
<dbReference type="GO" id="GO:0005840">
    <property type="term" value="C:ribosome"/>
    <property type="evidence" value="ECO:0007669"/>
    <property type="project" value="UniProtKB-KW"/>
</dbReference>
<dbReference type="GO" id="GO:0019843">
    <property type="term" value="F:rRNA binding"/>
    <property type="evidence" value="ECO:0007669"/>
    <property type="project" value="UniProtKB-UniRule"/>
</dbReference>
<dbReference type="GO" id="GO:0003735">
    <property type="term" value="F:structural constituent of ribosome"/>
    <property type="evidence" value="ECO:0007669"/>
    <property type="project" value="InterPro"/>
</dbReference>
<dbReference type="GO" id="GO:0006412">
    <property type="term" value="P:translation"/>
    <property type="evidence" value="ECO:0007669"/>
    <property type="project" value="UniProtKB-UniRule"/>
</dbReference>
<dbReference type="FunFam" id="3.30.70.330:FF:000001">
    <property type="entry name" value="50S ribosomal protein L23"/>
    <property type="match status" value="1"/>
</dbReference>
<dbReference type="Gene3D" id="3.30.70.330">
    <property type="match status" value="1"/>
</dbReference>
<dbReference type="HAMAP" id="MF_01369_B">
    <property type="entry name" value="Ribosomal_uL23_B"/>
    <property type="match status" value="1"/>
</dbReference>
<dbReference type="InterPro" id="IPR012677">
    <property type="entry name" value="Nucleotide-bd_a/b_plait_sf"/>
</dbReference>
<dbReference type="InterPro" id="IPR013025">
    <property type="entry name" value="Ribosomal_uL23-like"/>
</dbReference>
<dbReference type="InterPro" id="IPR012678">
    <property type="entry name" value="Ribosomal_uL23/eL15/eS24_sf"/>
</dbReference>
<dbReference type="InterPro" id="IPR001014">
    <property type="entry name" value="Ribosomal_uL23_CS"/>
</dbReference>
<dbReference type="NCBIfam" id="NF004363">
    <property type="entry name" value="PRK05738.2-4"/>
    <property type="match status" value="1"/>
</dbReference>
<dbReference type="PANTHER" id="PTHR11620">
    <property type="entry name" value="60S RIBOSOMAL PROTEIN L23A"/>
    <property type="match status" value="1"/>
</dbReference>
<dbReference type="Pfam" id="PF00276">
    <property type="entry name" value="Ribosomal_L23"/>
    <property type="match status" value="1"/>
</dbReference>
<dbReference type="SUPFAM" id="SSF54189">
    <property type="entry name" value="Ribosomal proteins S24e, L23 and L15e"/>
    <property type="match status" value="1"/>
</dbReference>
<dbReference type="PROSITE" id="PS00050">
    <property type="entry name" value="RIBOSOMAL_L23"/>
    <property type="match status" value="1"/>
</dbReference>
<keyword id="KW-1185">Reference proteome</keyword>
<keyword id="KW-0687">Ribonucleoprotein</keyword>
<keyword id="KW-0689">Ribosomal protein</keyword>
<keyword id="KW-0694">RNA-binding</keyword>
<keyword id="KW-0699">rRNA-binding</keyword>
<gene>
    <name evidence="1" type="primary">rplW</name>
    <name type="ordered locus">CD630_00750</name>
</gene>
<organism>
    <name type="scientific">Clostridioides difficile (strain 630)</name>
    <name type="common">Peptoclostridium difficile</name>
    <dbReference type="NCBI Taxonomy" id="272563"/>
    <lineage>
        <taxon>Bacteria</taxon>
        <taxon>Bacillati</taxon>
        <taxon>Bacillota</taxon>
        <taxon>Clostridia</taxon>
        <taxon>Peptostreptococcales</taxon>
        <taxon>Peptostreptococcaceae</taxon>
        <taxon>Clostridioides</taxon>
    </lineage>
</organism>
<reference key="1">
    <citation type="journal article" date="2006" name="Nat. Genet.">
        <title>The multidrug-resistant human pathogen Clostridium difficile has a highly mobile, mosaic genome.</title>
        <authorList>
            <person name="Sebaihia M."/>
            <person name="Wren B.W."/>
            <person name="Mullany P."/>
            <person name="Fairweather N.F."/>
            <person name="Minton N."/>
            <person name="Stabler R."/>
            <person name="Thomson N.R."/>
            <person name="Roberts A.P."/>
            <person name="Cerdeno-Tarraga A.M."/>
            <person name="Wang H."/>
            <person name="Holden M.T.G."/>
            <person name="Wright A."/>
            <person name="Churcher C."/>
            <person name="Quail M.A."/>
            <person name="Baker S."/>
            <person name="Bason N."/>
            <person name="Brooks K."/>
            <person name="Chillingworth T."/>
            <person name="Cronin A."/>
            <person name="Davis P."/>
            <person name="Dowd L."/>
            <person name="Fraser A."/>
            <person name="Feltwell T."/>
            <person name="Hance Z."/>
            <person name="Holroyd S."/>
            <person name="Jagels K."/>
            <person name="Moule S."/>
            <person name="Mungall K."/>
            <person name="Price C."/>
            <person name="Rabbinowitsch E."/>
            <person name="Sharp S."/>
            <person name="Simmonds M."/>
            <person name="Stevens K."/>
            <person name="Unwin L."/>
            <person name="Whithead S."/>
            <person name="Dupuy B."/>
            <person name="Dougan G."/>
            <person name="Barrell B."/>
            <person name="Parkhill J."/>
        </authorList>
    </citation>
    <scope>NUCLEOTIDE SEQUENCE [LARGE SCALE GENOMIC DNA]</scope>
    <source>
        <strain>630</strain>
    </source>
</reference>
<proteinExistence type="inferred from homology"/>